<protein>
    <recommendedName>
        <fullName>Uncharacterized transporter YaaJ</fullName>
    </recommendedName>
</protein>
<name>YAAJ_ECOLI</name>
<reference key="1">
    <citation type="journal article" date="1992" name="Nucleic Acids Res.">
        <title>Systematic sequencing of the Escherichia coli genome: analysis of the 0-2.4 min region.</title>
        <authorList>
            <person name="Yura T."/>
            <person name="Mori H."/>
            <person name="Nagai H."/>
            <person name="Nagata T."/>
            <person name="Ishihama A."/>
            <person name="Fujita N."/>
            <person name="Isono K."/>
            <person name="Mizobuchi K."/>
            <person name="Nakata A."/>
        </authorList>
    </citation>
    <scope>NUCLEOTIDE SEQUENCE [LARGE SCALE GENOMIC DNA]</scope>
    <source>
        <strain>K12</strain>
    </source>
</reference>
<reference key="2">
    <citation type="journal article" date="1997" name="Science">
        <title>The complete genome sequence of Escherichia coli K-12.</title>
        <authorList>
            <person name="Blattner F.R."/>
            <person name="Plunkett G. III"/>
            <person name="Bloch C.A."/>
            <person name="Perna N.T."/>
            <person name="Burland V."/>
            <person name="Riley M."/>
            <person name="Collado-Vides J."/>
            <person name="Glasner J.D."/>
            <person name="Rode C.K."/>
            <person name="Mayhew G.F."/>
            <person name="Gregor J."/>
            <person name="Davis N.W."/>
            <person name="Kirkpatrick H.A."/>
            <person name="Goeden M.A."/>
            <person name="Rose D.J."/>
            <person name="Mau B."/>
            <person name="Shao Y."/>
        </authorList>
    </citation>
    <scope>NUCLEOTIDE SEQUENCE [LARGE SCALE GENOMIC DNA]</scope>
    <source>
        <strain>K12 / MG1655 / ATCC 47076</strain>
    </source>
</reference>
<reference key="3">
    <citation type="journal article" date="2006" name="Mol. Syst. Biol.">
        <title>Highly accurate genome sequences of Escherichia coli K-12 strains MG1655 and W3110.</title>
        <authorList>
            <person name="Hayashi K."/>
            <person name="Morooka N."/>
            <person name="Yamamoto Y."/>
            <person name="Fujita K."/>
            <person name="Isono K."/>
            <person name="Choi S."/>
            <person name="Ohtsubo E."/>
            <person name="Baba T."/>
            <person name="Wanner B.L."/>
            <person name="Mori H."/>
            <person name="Horiuchi T."/>
        </authorList>
    </citation>
    <scope>NUCLEOTIDE SEQUENCE [LARGE SCALE GENOMIC DNA]</scope>
    <source>
        <strain>K12 / W3110 / ATCC 27325 / DSM 5911</strain>
    </source>
</reference>
<dbReference type="EMBL" id="U00096">
    <property type="protein sequence ID" value="AAC73118.1"/>
    <property type="molecule type" value="Genomic_DNA"/>
</dbReference>
<dbReference type="EMBL" id="AP009048">
    <property type="protein sequence ID" value="BAB96585.1"/>
    <property type="molecule type" value="Genomic_DNA"/>
</dbReference>
<dbReference type="PIR" id="G64720">
    <property type="entry name" value="G64720"/>
</dbReference>
<dbReference type="RefSeq" id="NP_414548.1">
    <property type="nucleotide sequence ID" value="NC_000913.3"/>
</dbReference>
<dbReference type="RefSeq" id="WP_001112606.1">
    <property type="nucleotide sequence ID" value="NZ_LN832404.1"/>
</dbReference>
<dbReference type="SMR" id="P30143"/>
<dbReference type="BioGRID" id="4261938">
    <property type="interactions" value="470"/>
</dbReference>
<dbReference type="FunCoup" id="P30143">
    <property type="interactions" value="304"/>
</dbReference>
<dbReference type="STRING" id="511145.b0007"/>
<dbReference type="TCDB" id="2.A.25.1.10">
    <property type="family name" value="the alanine or glycine:cation symporter (agcs) family"/>
</dbReference>
<dbReference type="PaxDb" id="511145-b0007"/>
<dbReference type="EnsemblBacteria" id="AAC73118">
    <property type="protein sequence ID" value="AAC73118"/>
    <property type="gene ID" value="b0007"/>
</dbReference>
<dbReference type="GeneID" id="944745"/>
<dbReference type="KEGG" id="ecj:JW0006"/>
<dbReference type="KEGG" id="eco:b0007"/>
<dbReference type="KEGG" id="ecoc:C3026_00040"/>
<dbReference type="PATRIC" id="fig|1411691.4.peg.2276"/>
<dbReference type="EchoBASE" id="EB1516"/>
<dbReference type="eggNOG" id="COG1115">
    <property type="taxonomic scope" value="Bacteria"/>
</dbReference>
<dbReference type="HOGENOM" id="CLU_024867_0_1_6"/>
<dbReference type="InParanoid" id="P30143"/>
<dbReference type="OMA" id="ILMAPEY"/>
<dbReference type="OrthoDB" id="9806926at2"/>
<dbReference type="PhylomeDB" id="P30143"/>
<dbReference type="BioCyc" id="EcoCyc:YAAJ-MONOMER"/>
<dbReference type="PRO" id="PR:P30143"/>
<dbReference type="Proteomes" id="UP000000625">
    <property type="component" value="Chromosome"/>
</dbReference>
<dbReference type="GO" id="GO:0005886">
    <property type="term" value="C:plasma membrane"/>
    <property type="evidence" value="ECO:0000314"/>
    <property type="project" value="EcoCyc"/>
</dbReference>
<dbReference type="GO" id="GO:0005283">
    <property type="term" value="F:amino acid:sodium symporter activity"/>
    <property type="evidence" value="ECO:0007669"/>
    <property type="project" value="InterPro"/>
</dbReference>
<dbReference type="FunFam" id="1.20.1740.10:FF:000004">
    <property type="entry name" value="Sodium:alanine symporter family protein"/>
    <property type="match status" value="1"/>
</dbReference>
<dbReference type="Gene3D" id="1.20.1740.10">
    <property type="entry name" value="Amino acid/polyamine transporter I"/>
    <property type="match status" value="1"/>
</dbReference>
<dbReference type="InterPro" id="IPR001463">
    <property type="entry name" value="Na/Ala_symport"/>
</dbReference>
<dbReference type="NCBIfam" id="TIGR00835">
    <property type="entry name" value="agcS"/>
    <property type="match status" value="1"/>
</dbReference>
<dbReference type="PANTHER" id="PTHR30330">
    <property type="entry name" value="AGSS FAMILY TRANSPORTER, SODIUM-ALANINE"/>
    <property type="match status" value="1"/>
</dbReference>
<dbReference type="PANTHER" id="PTHR30330:SF1">
    <property type="entry name" value="AMINO-ACID CARRIER PROTEIN ALST"/>
    <property type="match status" value="1"/>
</dbReference>
<dbReference type="Pfam" id="PF01235">
    <property type="entry name" value="Na_Ala_symp"/>
    <property type="match status" value="1"/>
</dbReference>
<dbReference type="PRINTS" id="PR00175">
    <property type="entry name" value="NAALASMPORT"/>
</dbReference>
<dbReference type="PROSITE" id="PS00873">
    <property type="entry name" value="NA_ALANINE_SYMP"/>
    <property type="match status" value="1"/>
</dbReference>
<feature type="chain" id="PRO_0000161566" description="Uncharacterized transporter YaaJ">
    <location>
        <begin position="1"/>
        <end position="476"/>
    </location>
</feature>
<feature type="transmembrane region" description="Helical" evidence="1">
    <location>
        <begin position="4"/>
        <end position="24"/>
    </location>
</feature>
<feature type="transmembrane region" description="Helical" evidence="1">
    <location>
        <begin position="81"/>
        <end position="101"/>
    </location>
</feature>
<feature type="transmembrane region" description="Helical" evidence="1">
    <location>
        <begin position="141"/>
        <end position="161"/>
    </location>
</feature>
<feature type="transmembrane region" description="Helical" evidence="1">
    <location>
        <begin position="174"/>
        <end position="194"/>
    </location>
</feature>
<feature type="transmembrane region" description="Helical" evidence="1">
    <location>
        <begin position="207"/>
        <end position="227"/>
    </location>
</feature>
<feature type="transmembrane region" description="Helical" evidence="1">
    <location>
        <begin position="233"/>
        <end position="253"/>
    </location>
</feature>
<feature type="transmembrane region" description="Helical" evidence="1">
    <location>
        <begin position="300"/>
        <end position="320"/>
    </location>
</feature>
<feature type="transmembrane region" description="Helical" evidence="1">
    <location>
        <begin position="351"/>
        <end position="371"/>
    </location>
</feature>
<feature type="transmembrane region" description="Helical" evidence="1">
    <location>
        <begin position="391"/>
        <end position="411"/>
    </location>
</feature>
<feature type="transmembrane region" description="Helical" evidence="1">
    <location>
        <begin position="414"/>
        <end position="434"/>
    </location>
</feature>
<organism>
    <name type="scientific">Escherichia coli (strain K12)</name>
    <dbReference type="NCBI Taxonomy" id="83333"/>
    <lineage>
        <taxon>Bacteria</taxon>
        <taxon>Pseudomonadati</taxon>
        <taxon>Pseudomonadota</taxon>
        <taxon>Gammaproteobacteria</taxon>
        <taxon>Enterobacterales</taxon>
        <taxon>Enterobacteriaceae</taxon>
        <taxon>Escherichia</taxon>
    </lineage>
</organism>
<proteinExistence type="inferred from homology"/>
<evidence type="ECO:0000255" key="1"/>
<evidence type="ECO:0000305" key="2"/>
<sequence length="476" mass="51663">MPDFFSFINSVLWGSVMIYLLFGAGCWFTFRTGFVQFRYIRQFGKSLKNSIHPQPGGLTSFQSLCTSLAARVGSGNLAGVALAITAGGPGAVFWMWVAAFIGMATSFAECSLAQLYKERDVNGQFRGGPAWYMARGLGMRWMGVLFAVFLLIAYGIIFSGVQANAVARALSFSFDFPPLVTGIILAVFTLLAITRGLHGVARLMQGFVPLMAIIWVLTSLVICVMNIGQLPHVIWSIFESAFGWQEAAGGAAGYTLSQAITNGFQRSMFSNEAGMGSTPNAAAAAASWPPHPAAQGIVQMIGIFIDTLVICTASAMLILLAGNGTTYMPLEGIQLIQKAMRVLMGSWGAEFVTLVVILFAFSSIVANYIYAENNLFFLRLNNPKAIWCLRICTFATVIGGTLLSLPLMWQLADIIMACMAITNLTAILLLSPVVHTIASDYLRQRKLGVRPVFDPLRYPDIGRQLSPDAWDDVSQE</sequence>
<accession>P30143</accession>
<gene>
    <name type="primary">yaaJ</name>
    <name type="ordered locus">b0007</name>
    <name type="ordered locus">JW0006</name>
</gene>
<comment type="subcellular location">
    <subcellularLocation>
        <location evidence="2">Cell inner membrane</location>
        <topology evidence="2">Multi-pass membrane protein</topology>
    </subcellularLocation>
</comment>
<comment type="similarity">
    <text evidence="2">Belongs to the alanine or glycine:cation symporter (AGCS) (TC 2.A.25) family.</text>
</comment>
<keyword id="KW-0997">Cell inner membrane</keyword>
<keyword id="KW-1003">Cell membrane</keyword>
<keyword id="KW-0472">Membrane</keyword>
<keyword id="KW-1185">Reference proteome</keyword>
<keyword id="KW-0769">Symport</keyword>
<keyword id="KW-0812">Transmembrane</keyword>
<keyword id="KW-1133">Transmembrane helix</keyword>
<keyword id="KW-0813">Transport</keyword>